<proteinExistence type="inferred from homology"/>
<sequence length="70" mass="8327">MKARELQELRKSSPQELQSKLNDLKAELFNLRFQLATGQLENPMRIREVKKSIAQIKTILREEEIRAYQQ</sequence>
<feature type="chain" id="PRO_1000007456" description="Large ribosomal subunit protein uL29">
    <location>
        <begin position="1"/>
        <end position="70"/>
    </location>
</feature>
<keyword id="KW-0687">Ribonucleoprotein</keyword>
<keyword id="KW-0689">Ribosomal protein</keyword>
<dbReference type="EMBL" id="CP000726">
    <property type="protein sequence ID" value="ABS34792.1"/>
    <property type="molecule type" value="Genomic_DNA"/>
</dbReference>
<dbReference type="RefSeq" id="WP_003357691.1">
    <property type="nucleotide sequence ID" value="NC_009697.1"/>
</dbReference>
<dbReference type="SMR" id="A7FZ61"/>
<dbReference type="GeneID" id="92940242"/>
<dbReference type="KEGG" id="cba:CLB_3529"/>
<dbReference type="HOGENOM" id="CLU_158491_5_2_9"/>
<dbReference type="GO" id="GO:0022625">
    <property type="term" value="C:cytosolic large ribosomal subunit"/>
    <property type="evidence" value="ECO:0007669"/>
    <property type="project" value="TreeGrafter"/>
</dbReference>
<dbReference type="GO" id="GO:0003735">
    <property type="term" value="F:structural constituent of ribosome"/>
    <property type="evidence" value="ECO:0007669"/>
    <property type="project" value="InterPro"/>
</dbReference>
<dbReference type="GO" id="GO:0006412">
    <property type="term" value="P:translation"/>
    <property type="evidence" value="ECO:0007669"/>
    <property type="project" value="UniProtKB-UniRule"/>
</dbReference>
<dbReference type="CDD" id="cd00427">
    <property type="entry name" value="Ribosomal_L29_HIP"/>
    <property type="match status" value="1"/>
</dbReference>
<dbReference type="FunFam" id="1.10.287.310:FF:000001">
    <property type="entry name" value="50S ribosomal protein L29"/>
    <property type="match status" value="1"/>
</dbReference>
<dbReference type="Gene3D" id="1.10.287.310">
    <property type="match status" value="1"/>
</dbReference>
<dbReference type="HAMAP" id="MF_00374">
    <property type="entry name" value="Ribosomal_uL29"/>
    <property type="match status" value="1"/>
</dbReference>
<dbReference type="InterPro" id="IPR050063">
    <property type="entry name" value="Ribosomal_protein_uL29"/>
</dbReference>
<dbReference type="InterPro" id="IPR001854">
    <property type="entry name" value="Ribosomal_uL29"/>
</dbReference>
<dbReference type="InterPro" id="IPR018254">
    <property type="entry name" value="Ribosomal_uL29_CS"/>
</dbReference>
<dbReference type="InterPro" id="IPR036049">
    <property type="entry name" value="Ribosomal_uL29_sf"/>
</dbReference>
<dbReference type="NCBIfam" id="TIGR00012">
    <property type="entry name" value="L29"/>
    <property type="match status" value="1"/>
</dbReference>
<dbReference type="PANTHER" id="PTHR10916">
    <property type="entry name" value="60S RIBOSOMAL PROTEIN L35/50S RIBOSOMAL PROTEIN L29"/>
    <property type="match status" value="1"/>
</dbReference>
<dbReference type="PANTHER" id="PTHR10916:SF0">
    <property type="entry name" value="LARGE RIBOSOMAL SUBUNIT PROTEIN UL29C"/>
    <property type="match status" value="1"/>
</dbReference>
<dbReference type="Pfam" id="PF00831">
    <property type="entry name" value="Ribosomal_L29"/>
    <property type="match status" value="1"/>
</dbReference>
<dbReference type="SUPFAM" id="SSF46561">
    <property type="entry name" value="Ribosomal protein L29 (L29p)"/>
    <property type="match status" value="1"/>
</dbReference>
<dbReference type="PROSITE" id="PS00579">
    <property type="entry name" value="RIBOSOMAL_L29"/>
    <property type="match status" value="1"/>
</dbReference>
<reference key="1">
    <citation type="journal article" date="2007" name="PLoS ONE">
        <title>Analysis of the neurotoxin complex genes in Clostridium botulinum A1-A4 and B1 strains: BoNT/A3, /Ba4 and /B1 clusters are located within plasmids.</title>
        <authorList>
            <person name="Smith T.J."/>
            <person name="Hill K.K."/>
            <person name="Foley B.T."/>
            <person name="Detter J.C."/>
            <person name="Munk A.C."/>
            <person name="Bruce D.C."/>
            <person name="Doggett N.A."/>
            <person name="Smith L.A."/>
            <person name="Marks J.D."/>
            <person name="Xie G."/>
            <person name="Brettin T.S."/>
        </authorList>
    </citation>
    <scope>NUCLEOTIDE SEQUENCE [LARGE SCALE GENOMIC DNA]</scope>
    <source>
        <strain>ATCC 19397 / Type A</strain>
    </source>
</reference>
<gene>
    <name evidence="1" type="primary">rpmC</name>
    <name type="ordered locus">CLB_3529</name>
</gene>
<name>RL29_CLOB1</name>
<protein>
    <recommendedName>
        <fullName evidence="1">Large ribosomal subunit protein uL29</fullName>
    </recommendedName>
    <alternativeName>
        <fullName evidence="2">50S ribosomal protein L29</fullName>
    </alternativeName>
</protein>
<comment type="similarity">
    <text evidence="1">Belongs to the universal ribosomal protein uL29 family.</text>
</comment>
<organism>
    <name type="scientific">Clostridium botulinum (strain ATCC 19397 / Type A)</name>
    <dbReference type="NCBI Taxonomy" id="441770"/>
    <lineage>
        <taxon>Bacteria</taxon>
        <taxon>Bacillati</taxon>
        <taxon>Bacillota</taxon>
        <taxon>Clostridia</taxon>
        <taxon>Eubacteriales</taxon>
        <taxon>Clostridiaceae</taxon>
        <taxon>Clostridium</taxon>
    </lineage>
</organism>
<accession>A7FZ61</accession>
<evidence type="ECO:0000255" key="1">
    <source>
        <dbReference type="HAMAP-Rule" id="MF_00374"/>
    </source>
</evidence>
<evidence type="ECO:0000305" key="2"/>